<accession>Q253T5</accession>
<protein>
    <recommendedName>
        <fullName evidence="1">Small ribosomal subunit protein bS21</fullName>
    </recommendedName>
    <alternativeName>
        <fullName evidence="3">30S ribosomal protein S21</fullName>
    </alternativeName>
</protein>
<evidence type="ECO:0000255" key="1">
    <source>
        <dbReference type="HAMAP-Rule" id="MF_00358"/>
    </source>
</evidence>
<evidence type="ECO:0000256" key="2">
    <source>
        <dbReference type="SAM" id="MobiDB-lite"/>
    </source>
</evidence>
<evidence type="ECO:0000305" key="3"/>
<name>RS21_CHLFF</name>
<dbReference type="EMBL" id="AP006861">
    <property type="protein sequence ID" value="BAE81453.1"/>
    <property type="molecule type" value="Genomic_DNA"/>
</dbReference>
<dbReference type="RefSeq" id="WP_006343002.1">
    <property type="nucleotide sequence ID" value="NC_007899.1"/>
</dbReference>
<dbReference type="SMR" id="Q253T5"/>
<dbReference type="STRING" id="264202.CF0681"/>
<dbReference type="GeneID" id="93024872"/>
<dbReference type="KEGG" id="cfe:CF0681"/>
<dbReference type="eggNOG" id="COG0828">
    <property type="taxonomic scope" value="Bacteria"/>
</dbReference>
<dbReference type="HOGENOM" id="CLU_159258_2_3_0"/>
<dbReference type="OrthoDB" id="9799244at2"/>
<dbReference type="Proteomes" id="UP000001260">
    <property type="component" value="Chromosome"/>
</dbReference>
<dbReference type="GO" id="GO:1990904">
    <property type="term" value="C:ribonucleoprotein complex"/>
    <property type="evidence" value="ECO:0007669"/>
    <property type="project" value="UniProtKB-KW"/>
</dbReference>
<dbReference type="GO" id="GO:0005840">
    <property type="term" value="C:ribosome"/>
    <property type="evidence" value="ECO:0007669"/>
    <property type="project" value="UniProtKB-KW"/>
</dbReference>
<dbReference type="GO" id="GO:0003735">
    <property type="term" value="F:structural constituent of ribosome"/>
    <property type="evidence" value="ECO:0007669"/>
    <property type="project" value="InterPro"/>
</dbReference>
<dbReference type="GO" id="GO:0006412">
    <property type="term" value="P:translation"/>
    <property type="evidence" value="ECO:0007669"/>
    <property type="project" value="UniProtKB-UniRule"/>
</dbReference>
<dbReference type="Gene3D" id="1.20.5.1150">
    <property type="entry name" value="Ribosomal protein S8"/>
    <property type="match status" value="1"/>
</dbReference>
<dbReference type="HAMAP" id="MF_00358">
    <property type="entry name" value="Ribosomal_bS21"/>
    <property type="match status" value="1"/>
</dbReference>
<dbReference type="InterPro" id="IPR001911">
    <property type="entry name" value="Ribosomal_bS21"/>
</dbReference>
<dbReference type="InterPro" id="IPR038380">
    <property type="entry name" value="Ribosomal_bS21_sf"/>
</dbReference>
<dbReference type="NCBIfam" id="TIGR00030">
    <property type="entry name" value="S21p"/>
    <property type="match status" value="1"/>
</dbReference>
<dbReference type="Pfam" id="PF01165">
    <property type="entry name" value="Ribosomal_S21"/>
    <property type="match status" value="1"/>
</dbReference>
<dbReference type="PRINTS" id="PR00976">
    <property type="entry name" value="RIBOSOMALS21"/>
</dbReference>
<organism>
    <name type="scientific">Chlamydia felis (strain Fe/C-56)</name>
    <name type="common">Chlamydophila felis</name>
    <dbReference type="NCBI Taxonomy" id="264202"/>
    <lineage>
        <taxon>Bacteria</taxon>
        <taxon>Pseudomonadati</taxon>
        <taxon>Chlamydiota</taxon>
        <taxon>Chlamydiia</taxon>
        <taxon>Chlamydiales</taxon>
        <taxon>Chlamydiaceae</taxon>
        <taxon>Chlamydia/Chlamydophila group</taxon>
        <taxon>Chlamydia</taxon>
    </lineage>
</organism>
<sequence length="58" mass="6606">MPSVKVRVGEPVDRALRILKKKVDKEGILKAAKAHRFYDKPSVKKRAKSKAAAKYRSR</sequence>
<proteinExistence type="inferred from homology"/>
<gene>
    <name evidence="1" type="primary">rpsU</name>
    <name type="ordered locus">CF0681</name>
</gene>
<comment type="similarity">
    <text evidence="1">Belongs to the bacterial ribosomal protein bS21 family.</text>
</comment>
<reference key="1">
    <citation type="journal article" date="2006" name="DNA Res.">
        <title>Genome sequence of the cat pathogen, Chlamydophila felis.</title>
        <authorList>
            <person name="Azuma Y."/>
            <person name="Hirakawa H."/>
            <person name="Yamashita A."/>
            <person name="Cai Y."/>
            <person name="Rahman M.A."/>
            <person name="Suzuki H."/>
            <person name="Mitaku S."/>
            <person name="Toh H."/>
            <person name="Goto S."/>
            <person name="Murakami T."/>
            <person name="Sugi K."/>
            <person name="Hayashi H."/>
            <person name="Fukushi H."/>
            <person name="Hattori M."/>
            <person name="Kuhara S."/>
            <person name="Shirai M."/>
        </authorList>
    </citation>
    <scope>NUCLEOTIDE SEQUENCE [LARGE SCALE GENOMIC DNA]</scope>
    <source>
        <strain>Fe/C-56</strain>
    </source>
</reference>
<keyword id="KW-0687">Ribonucleoprotein</keyword>
<keyword id="KW-0689">Ribosomal protein</keyword>
<feature type="chain" id="PRO_0000266653" description="Small ribosomal subunit protein bS21">
    <location>
        <begin position="1"/>
        <end position="58"/>
    </location>
</feature>
<feature type="region of interest" description="Disordered" evidence="2">
    <location>
        <begin position="39"/>
        <end position="58"/>
    </location>
</feature>
<feature type="compositionally biased region" description="Basic residues" evidence="2">
    <location>
        <begin position="43"/>
        <end position="58"/>
    </location>
</feature>